<name>MTFA_SALEP</name>
<keyword id="KW-0031">Aminopeptidase</keyword>
<keyword id="KW-0963">Cytoplasm</keyword>
<keyword id="KW-0378">Hydrolase</keyword>
<keyword id="KW-0479">Metal-binding</keyword>
<keyword id="KW-0482">Metalloprotease</keyword>
<keyword id="KW-0645">Protease</keyword>
<keyword id="KW-0862">Zinc</keyword>
<accession>B5QYT3</accession>
<feature type="chain" id="PRO_1000147843" description="Mlc titration factor A">
    <location>
        <begin position="1"/>
        <end position="265"/>
    </location>
</feature>
<feature type="binding site" evidence="1">
    <location>
        <position position="111"/>
    </location>
    <ligand>
        <name>Zn(2+)</name>
        <dbReference type="ChEBI" id="CHEBI:29105"/>
    </ligand>
</feature>
<feature type="binding site" evidence="1">
    <location>
        <position position="148"/>
    </location>
    <ligand>
        <name>Zn(2+)</name>
        <dbReference type="ChEBI" id="CHEBI:29105"/>
    </ligand>
</feature>
<feature type="binding site" evidence="1">
    <location>
        <position position="152"/>
    </location>
    <ligand>
        <name>Zn(2+)</name>
        <dbReference type="ChEBI" id="CHEBI:29105"/>
    </ligand>
</feature>
<feature type="binding site" evidence="1">
    <location>
        <position position="211"/>
    </location>
    <ligand>
        <name>Zn(2+)</name>
        <dbReference type="ChEBI" id="CHEBI:29105"/>
    </ligand>
</feature>
<evidence type="ECO:0000255" key="1">
    <source>
        <dbReference type="HAMAP-Rule" id="MF_01593"/>
    </source>
</evidence>
<protein>
    <recommendedName>
        <fullName evidence="1">Mlc titration factor A</fullName>
    </recommendedName>
    <alternativeName>
        <fullName evidence="1">Probable zinc metallopeptidase MtfA</fullName>
        <ecNumber evidence="1">3.4.11.-</ecNumber>
    </alternativeName>
</protein>
<reference key="1">
    <citation type="journal article" date="2008" name="Genome Res.">
        <title>Comparative genome analysis of Salmonella enteritidis PT4 and Salmonella gallinarum 287/91 provides insights into evolutionary and host adaptation pathways.</title>
        <authorList>
            <person name="Thomson N.R."/>
            <person name="Clayton D.J."/>
            <person name="Windhorst D."/>
            <person name="Vernikos G."/>
            <person name="Davidson S."/>
            <person name="Churcher C."/>
            <person name="Quail M.A."/>
            <person name="Stevens M."/>
            <person name="Jones M.A."/>
            <person name="Watson M."/>
            <person name="Barron A."/>
            <person name="Layton A."/>
            <person name="Pickard D."/>
            <person name="Kingsley R.A."/>
            <person name="Bignell A."/>
            <person name="Clark L."/>
            <person name="Harris B."/>
            <person name="Ormond D."/>
            <person name="Abdellah Z."/>
            <person name="Brooks K."/>
            <person name="Cherevach I."/>
            <person name="Chillingworth T."/>
            <person name="Woodward J."/>
            <person name="Norberczak H."/>
            <person name="Lord A."/>
            <person name="Arrowsmith C."/>
            <person name="Jagels K."/>
            <person name="Moule S."/>
            <person name="Mungall K."/>
            <person name="Saunders M."/>
            <person name="Whitehead S."/>
            <person name="Chabalgoity J.A."/>
            <person name="Maskell D."/>
            <person name="Humphreys T."/>
            <person name="Roberts M."/>
            <person name="Barrow P.A."/>
            <person name="Dougan G."/>
            <person name="Parkhill J."/>
        </authorList>
    </citation>
    <scope>NUCLEOTIDE SEQUENCE [LARGE SCALE GENOMIC DNA]</scope>
    <source>
        <strain>P125109</strain>
    </source>
</reference>
<sequence>MIKWPWKAQEITQNEDWPWDDALAIPLLVNLTAQEQARLIALAERFLQQKRLVALQGFELDSLKSARIALIFCLPILELGIEWLDGFHEVLIYPAPFVVDDEWEDDIGLVHSQRVVQSGQSWQQGPIILNWLDIQDSFDASGFNLIIHEVAHKLDMRNGDRASGIPFIPLRDVAGWEHDLHAAMNNIQDEIDLVGESAASIDAYAATDPAECFAVLSEYFFSAPELFAPRFPALWQRFCQFYRQDPSQRLRVSAAEGDYGEESEH</sequence>
<proteinExistence type="inferred from homology"/>
<comment type="function">
    <text evidence="1">Involved in the modulation of the activity of the glucose-phosphotransferase system (glucose-PTS). Interacts with the transcriptional repressor Mlc, preventing its interaction with DNA and leading to the modulation of expression of genes regulated by Mlc, including ptsG, which encodes the PTS system glucose-specific EIICB component.</text>
</comment>
<comment type="function">
    <text evidence="1">Shows zinc-dependent metallopeptidase activity.</text>
</comment>
<comment type="cofactor">
    <cofactor evidence="1">
        <name>Zn(2+)</name>
        <dbReference type="ChEBI" id="CHEBI:29105"/>
    </cofactor>
    <text evidence="1">Binds 1 zinc ion per subunit.</text>
</comment>
<comment type="subunit">
    <text evidence="1">Interacts with Mlc.</text>
</comment>
<comment type="subcellular location">
    <subcellularLocation>
        <location evidence="1">Cytoplasm</location>
    </subcellularLocation>
</comment>
<comment type="similarity">
    <text evidence="1">Belongs to the MtfA family.</text>
</comment>
<gene>
    <name evidence="1" type="primary">mtfA</name>
    <name type="ordered locus">SEN1967</name>
</gene>
<dbReference type="EC" id="3.4.11.-" evidence="1"/>
<dbReference type="EMBL" id="AM933172">
    <property type="protein sequence ID" value="CAR33551.1"/>
    <property type="molecule type" value="Genomic_DNA"/>
</dbReference>
<dbReference type="RefSeq" id="WP_000598920.1">
    <property type="nucleotide sequence ID" value="NC_011294.1"/>
</dbReference>
<dbReference type="SMR" id="B5QYT3"/>
<dbReference type="MEROPS" id="M90.001"/>
<dbReference type="KEGG" id="set:SEN1967"/>
<dbReference type="HOGENOM" id="CLU_063037_2_0_6"/>
<dbReference type="Proteomes" id="UP000000613">
    <property type="component" value="Chromosome"/>
</dbReference>
<dbReference type="GO" id="GO:0005829">
    <property type="term" value="C:cytosol"/>
    <property type="evidence" value="ECO:0007669"/>
    <property type="project" value="TreeGrafter"/>
</dbReference>
<dbReference type="GO" id="GO:0004177">
    <property type="term" value="F:aminopeptidase activity"/>
    <property type="evidence" value="ECO:0007669"/>
    <property type="project" value="UniProtKB-UniRule"/>
</dbReference>
<dbReference type="GO" id="GO:0008237">
    <property type="term" value="F:metallopeptidase activity"/>
    <property type="evidence" value="ECO:0007669"/>
    <property type="project" value="UniProtKB-UniRule"/>
</dbReference>
<dbReference type="GO" id="GO:0008270">
    <property type="term" value="F:zinc ion binding"/>
    <property type="evidence" value="ECO:0007669"/>
    <property type="project" value="UniProtKB-UniRule"/>
</dbReference>
<dbReference type="GO" id="GO:0006508">
    <property type="term" value="P:proteolysis"/>
    <property type="evidence" value="ECO:0007669"/>
    <property type="project" value="UniProtKB-KW"/>
</dbReference>
<dbReference type="CDD" id="cd20169">
    <property type="entry name" value="Peptidase_M90_mtfA"/>
    <property type="match status" value="1"/>
</dbReference>
<dbReference type="FunFam" id="1.10.472.150:FF:000001">
    <property type="entry name" value="Protein MtfA"/>
    <property type="match status" value="1"/>
</dbReference>
<dbReference type="FunFam" id="3.40.390.10:FF:000012">
    <property type="entry name" value="Protein MtfA"/>
    <property type="match status" value="1"/>
</dbReference>
<dbReference type="Gene3D" id="3.40.390.10">
    <property type="entry name" value="Collagenase (Catalytic Domain)"/>
    <property type="match status" value="1"/>
</dbReference>
<dbReference type="Gene3D" id="1.10.472.150">
    <property type="entry name" value="Glucose-regulated metallo-peptidase M90, N-terminal domain"/>
    <property type="match status" value="1"/>
</dbReference>
<dbReference type="HAMAP" id="MF_01593">
    <property type="entry name" value="MtfA"/>
    <property type="match status" value="1"/>
</dbReference>
<dbReference type="InterPro" id="IPR024079">
    <property type="entry name" value="MetalloPept_cat_dom_sf"/>
</dbReference>
<dbReference type="InterPro" id="IPR057256">
    <property type="entry name" value="MtfA_enterob"/>
</dbReference>
<dbReference type="InterPro" id="IPR010384">
    <property type="entry name" value="MtfA_fam"/>
</dbReference>
<dbReference type="InterPro" id="IPR042252">
    <property type="entry name" value="MtfA_N"/>
</dbReference>
<dbReference type="NCBIfam" id="NF011939">
    <property type="entry name" value="PRK15410.1"/>
    <property type="match status" value="1"/>
</dbReference>
<dbReference type="PANTHER" id="PTHR30164">
    <property type="entry name" value="MTFA PEPTIDASE"/>
    <property type="match status" value="1"/>
</dbReference>
<dbReference type="PANTHER" id="PTHR30164:SF2">
    <property type="entry name" value="PROTEIN MTFA"/>
    <property type="match status" value="1"/>
</dbReference>
<dbReference type="Pfam" id="PF06167">
    <property type="entry name" value="Peptidase_M90"/>
    <property type="match status" value="1"/>
</dbReference>
<dbReference type="SUPFAM" id="SSF55486">
    <property type="entry name" value="Metalloproteases ('zincins'), catalytic domain"/>
    <property type="match status" value="1"/>
</dbReference>
<organism>
    <name type="scientific">Salmonella enteritidis PT4 (strain P125109)</name>
    <dbReference type="NCBI Taxonomy" id="550537"/>
    <lineage>
        <taxon>Bacteria</taxon>
        <taxon>Pseudomonadati</taxon>
        <taxon>Pseudomonadota</taxon>
        <taxon>Gammaproteobacteria</taxon>
        <taxon>Enterobacterales</taxon>
        <taxon>Enterobacteriaceae</taxon>
        <taxon>Salmonella</taxon>
    </lineage>
</organism>